<sequence length="660" mass="73936">MKAVVFAYHNIGCAAVRSLLEAGVEIAAVFTHVDDSNENVFFESVAKLAARNGIPVFAPEDVNHPLWVEKIRQMQPDSIFSFYYRHMLSQEILDIAPKGGFNLHGSLLPNYRGRAPINWVLVNGETETGMTLHTMTVKPDAGAIVAQEALAITDADTAATLHSRMTHLAGELLNKVIPQIVAGTHSLTEQDTTKASYFGRRTPADGEIKWANDSRTIFNLIRAVTEPFPGAFSYLGERRVTIWGATASEKTYDVTPGTIVETKPLTVACAQGSIVLHSGQAENGLYLSGDQLAAEMYLVEGMRFGPQASAVIAATRRQKVLIMGANGFIGNHLTKRLLDDGKYEIYAMDMSSSQIEQHLSHPDFHFVEGDITIHNEWIEYHIKKCDIVLPLVAIATPIEYTRNPLRVFELDFEENLKIVRACVKYDKRIIFPSTSEVYGMCTDEEFDEDTSPLITGPINRQRWIYSTSKQLLDRVIWAYGKKDNLKFTLFRPFNWMGPRLDSLNSARVGSSRAITQLILNLVEGTPIKLIDGGEQKRCFTDISEAIEALFRVIENKDGLCDGQIINIGSPDNEASIKVMAETLVEKFEEHPLRDQFPPFAGYNLVESQSFYGDGYQDVQHRRPSIKNAKKLLNWEPTIMMDQTIEDTLDFFLKTAVEETK</sequence>
<keyword id="KW-0046">Antibiotic resistance</keyword>
<keyword id="KW-0441">Lipid A biosynthesis</keyword>
<keyword id="KW-0444">Lipid biosynthesis</keyword>
<keyword id="KW-0443">Lipid metabolism</keyword>
<keyword id="KW-0448">Lipopolysaccharide biosynthesis</keyword>
<keyword id="KW-0511">Multifunctional enzyme</keyword>
<keyword id="KW-0520">NAD</keyword>
<keyword id="KW-0560">Oxidoreductase</keyword>
<keyword id="KW-1185">Reference proteome</keyword>
<keyword id="KW-0808">Transferase</keyword>
<comment type="function">
    <text evidence="1">Bifunctional enzyme that catalyzes the oxidative decarboxylation of UDP-glucuronic acid (UDP-GlcUA) to UDP-4-keto-arabinose (UDP-Ara4O) and the addition of a formyl group to UDP-4-amino-4-deoxy-L-arabinose (UDP-L-Ara4N) to form UDP-L-4-formamido-arabinose (UDP-L-Ara4FN). The modified arabinose is attached to lipid A and is required for resistance to polymyxin and cationic antimicrobial peptides.</text>
</comment>
<comment type="catalytic activity">
    <reaction evidence="1">
        <text>UDP-alpha-D-glucuronate + NAD(+) = UDP-beta-L-threo-pentopyranos-4-ulose + CO2 + NADH</text>
        <dbReference type="Rhea" id="RHEA:24702"/>
        <dbReference type="ChEBI" id="CHEBI:16526"/>
        <dbReference type="ChEBI" id="CHEBI:57540"/>
        <dbReference type="ChEBI" id="CHEBI:57945"/>
        <dbReference type="ChEBI" id="CHEBI:58052"/>
        <dbReference type="ChEBI" id="CHEBI:58710"/>
        <dbReference type="EC" id="1.1.1.305"/>
    </reaction>
</comment>
<comment type="catalytic activity">
    <reaction evidence="1">
        <text>UDP-4-amino-4-deoxy-beta-L-arabinose + (6R)-10-formyltetrahydrofolate = UDP-4-deoxy-4-formamido-beta-L-arabinose + (6S)-5,6,7,8-tetrahydrofolate + H(+)</text>
        <dbReference type="Rhea" id="RHEA:24706"/>
        <dbReference type="ChEBI" id="CHEBI:15378"/>
        <dbReference type="ChEBI" id="CHEBI:57453"/>
        <dbReference type="ChEBI" id="CHEBI:58708"/>
        <dbReference type="ChEBI" id="CHEBI:58709"/>
        <dbReference type="ChEBI" id="CHEBI:195366"/>
        <dbReference type="EC" id="2.1.2.13"/>
    </reaction>
</comment>
<comment type="pathway">
    <text evidence="1">Nucleotide-sugar biosynthesis; UDP-4-deoxy-4-formamido-beta-L-arabinose biosynthesis; UDP-4-deoxy-4-formamido-beta-L-arabinose from UDP-alpha-D-glucuronate: step 1/3.</text>
</comment>
<comment type="pathway">
    <text evidence="1">Nucleotide-sugar biosynthesis; UDP-4-deoxy-4-formamido-beta-L-arabinose biosynthesis; UDP-4-deoxy-4-formamido-beta-L-arabinose from UDP-alpha-D-glucuronate: step 3/3.</text>
</comment>
<comment type="pathway">
    <text evidence="1">Bacterial outer membrane biogenesis; lipopolysaccharide biosynthesis.</text>
</comment>
<comment type="subunit">
    <text evidence="1">Homohexamer, formed by a dimer of trimers.</text>
</comment>
<comment type="similarity">
    <text evidence="1">In the N-terminal section; belongs to the Fmt family. UDP-L-Ara4N formyltransferase subfamily.</text>
</comment>
<comment type="similarity">
    <text evidence="1">In the C-terminal section; belongs to the NAD(P)-dependent epimerase/dehydratase family. UDP-glucuronic acid decarboxylase subfamily.</text>
</comment>
<reference key="1">
    <citation type="submission" date="2007-08" db="EMBL/GenBank/DDBJ databases">
        <title>Complete sequence of Shewanella sediminis HAW-EB3.</title>
        <authorList>
            <consortium name="US DOE Joint Genome Institute"/>
            <person name="Copeland A."/>
            <person name="Lucas S."/>
            <person name="Lapidus A."/>
            <person name="Barry K."/>
            <person name="Glavina del Rio T."/>
            <person name="Dalin E."/>
            <person name="Tice H."/>
            <person name="Pitluck S."/>
            <person name="Chertkov O."/>
            <person name="Brettin T."/>
            <person name="Bruce D."/>
            <person name="Detter J.C."/>
            <person name="Han C."/>
            <person name="Schmutz J."/>
            <person name="Larimer F."/>
            <person name="Land M."/>
            <person name="Hauser L."/>
            <person name="Kyrpides N."/>
            <person name="Kim E."/>
            <person name="Zhao J.-S."/>
            <person name="Richardson P."/>
        </authorList>
    </citation>
    <scope>NUCLEOTIDE SEQUENCE [LARGE SCALE GENOMIC DNA]</scope>
    <source>
        <strain>HAW-EB3</strain>
    </source>
</reference>
<feature type="chain" id="PRO_0000379990" description="Bifunctional polymyxin resistance protein ArnA">
    <location>
        <begin position="1"/>
        <end position="660"/>
    </location>
</feature>
<feature type="region of interest" description="Formyltransferase ArnAFT">
    <location>
        <begin position="1"/>
        <end position="304"/>
    </location>
</feature>
<feature type="region of interest" description="Dehydrogenase ArnADH">
    <location>
        <begin position="316"/>
        <end position="660"/>
    </location>
</feature>
<feature type="active site" description="Proton donor; for formyltransferase activity" evidence="1">
    <location>
        <position position="104"/>
    </location>
</feature>
<feature type="active site" description="Proton acceptor; for decarboxylase activity" evidence="1">
    <location>
        <position position="436"/>
    </location>
</feature>
<feature type="active site" description="Proton donor; for decarboxylase activity" evidence="1">
    <location>
        <position position="621"/>
    </location>
</feature>
<feature type="binding site" evidence="1">
    <location>
        <position position="114"/>
    </location>
    <ligand>
        <name>(6R)-10-formyltetrahydrofolate</name>
        <dbReference type="ChEBI" id="CHEBI:195366"/>
    </ligand>
</feature>
<feature type="binding site" evidence="1">
    <location>
        <begin position="136"/>
        <end position="140"/>
    </location>
    <ligand>
        <name>(6R)-10-formyltetrahydrofolate</name>
        <dbReference type="ChEBI" id="CHEBI:195366"/>
    </ligand>
</feature>
<feature type="binding site" evidence="1">
    <location>
        <position position="349"/>
    </location>
    <ligand>
        <name>NAD(+)</name>
        <dbReference type="ChEBI" id="CHEBI:57540"/>
    </ligand>
</feature>
<feature type="binding site" evidence="1">
    <location>
        <begin position="370"/>
        <end position="371"/>
    </location>
    <ligand>
        <name>NAD(+)</name>
        <dbReference type="ChEBI" id="CHEBI:57540"/>
    </ligand>
</feature>
<feature type="binding site" evidence="1">
    <location>
        <position position="395"/>
    </location>
    <ligand>
        <name>UDP-alpha-D-glucuronate</name>
        <dbReference type="ChEBI" id="CHEBI:58052"/>
    </ligand>
</feature>
<feature type="binding site" evidence="1">
    <location>
        <position position="400"/>
    </location>
    <ligand>
        <name>UDP-alpha-D-glucuronate</name>
        <dbReference type="ChEBI" id="CHEBI:58052"/>
    </ligand>
</feature>
<feature type="binding site" evidence="1">
    <location>
        <begin position="434"/>
        <end position="435"/>
    </location>
    <ligand>
        <name>UDP-alpha-D-glucuronate</name>
        <dbReference type="ChEBI" id="CHEBI:58052"/>
    </ligand>
</feature>
<feature type="binding site" evidence="1">
    <location>
        <position position="462"/>
    </location>
    <ligand>
        <name>UDP-alpha-D-glucuronate</name>
        <dbReference type="ChEBI" id="CHEBI:58052"/>
    </ligand>
</feature>
<feature type="binding site" evidence="1">
    <location>
        <position position="494"/>
    </location>
    <ligand>
        <name>UDP-alpha-D-glucuronate</name>
        <dbReference type="ChEBI" id="CHEBI:58052"/>
    </ligand>
</feature>
<feature type="binding site" evidence="1">
    <location>
        <begin position="528"/>
        <end position="537"/>
    </location>
    <ligand>
        <name>UDP-alpha-D-glucuronate</name>
        <dbReference type="ChEBI" id="CHEBI:58052"/>
    </ligand>
</feature>
<feature type="binding site" evidence="1">
    <location>
        <position position="615"/>
    </location>
    <ligand>
        <name>UDP-alpha-D-glucuronate</name>
        <dbReference type="ChEBI" id="CHEBI:58052"/>
    </ligand>
</feature>
<feature type="site" description="Transition state stabilizer" evidence="1">
    <location>
        <position position="102"/>
    </location>
</feature>
<feature type="site" description="Raises pKa of active site His" evidence="1">
    <location>
        <position position="140"/>
    </location>
</feature>
<name>ARNA_SHESH</name>
<protein>
    <recommendedName>
        <fullName evidence="1">Bifunctional polymyxin resistance protein ArnA</fullName>
    </recommendedName>
    <domain>
        <recommendedName>
            <fullName evidence="1">UDP-4-amino-4-deoxy-L-arabinose formyltransferase</fullName>
            <ecNumber evidence="1">2.1.2.13</ecNumber>
        </recommendedName>
        <alternativeName>
            <fullName evidence="1">ArnAFT</fullName>
        </alternativeName>
        <alternativeName>
            <fullName evidence="1">UDP-L-Ara4N formyltransferase</fullName>
        </alternativeName>
    </domain>
    <domain>
        <recommendedName>
            <fullName evidence="1">UDP-glucuronic acid oxidase, UDP-4-keto-hexauronic acid decarboxylating</fullName>
            <ecNumber evidence="1">1.1.1.305</ecNumber>
        </recommendedName>
        <alternativeName>
            <fullName evidence="1">ArnADH</fullName>
        </alternativeName>
        <alternativeName>
            <fullName evidence="1">UDP-GlcUA decarboxylase</fullName>
        </alternativeName>
        <alternativeName>
            <fullName evidence="1">UDP-glucuronic acid dehydrogenase</fullName>
        </alternativeName>
    </domain>
</protein>
<accession>A8FRR2</accession>
<dbReference type="EC" id="2.1.2.13" evidence="1"/>
<dbReference type="EC" id="1.1.1.305" evidence="1"/>
<dbReference type="EMBL" id="CP000821">
    <property type="protein sequence ID" value="ABV35535.1"/>
    <property type="molecule type" value="Genomic_DNA"/>
</dbReference>
<dbReference type="RefSeq" id="WP_012141271.1">
    <property type="nucleotide sequence ID" value="NC_009831.1"/>
</dbReference>
<dbReference type="SMR" id="A8FRR2"/>
<dbReference type="STRING" id="425104.Ssed_0924"/>
<dbReference type="KEGG" id="sse:Ssed_0924"/>
<dbReference type="eggNOG" id="COG0223">
    <property type="taxonomic scope" value="Bacteria"/>
</dbReference>
<dbReference type="eggNOG" id="COG0451">
    <property type="taxonomic scope" value="Bacteria"/>
</dbReference>
<dbReference type="HOGENOM" id="CLU_007383_23_2_6"/>
<dbReference type="OrthoDB" id="9802815at2"/>
<dbReference type="UniPathway" id="UPA00030"/>
<dbReference type="UniPathway" id="UPA00032">
    <property type="reaction ID" value="UER00492"/>
</dbReference>
<dbReference type="UniPathway" id="UPA00032">
    <property type="reaction ID" value="UER00494"/>
</dbReference>
<dbReference type="Proteomes" id="UP000002015">
    <property type="component" value="Chromosome"/>
</dbReference>
<dbReference type="GO" id="GO:0016020">
    <property type="term" value="C:membrane"/>
    <property type="evidence" value="ECO:0007669"/>
    <property type="project" value="GOC"/>
</dbReference>
<dbReference type="GO" id="GO:0016831">
    <property type="term" value="F:carboxy-lyase activity"/>
    <property type="evidence" value="ECO:0007669"/>
    <property type="project" value="InterPro"/>
</dbReference>
<dbReference type="GO" id="GO:0099619">
    <property type="term" value="F:UDP-4-amino-4-deoxy-L-arabinose formyltransferase activity"/>
    <property type="evidence" value="ECO:0007669"/>
    <property type="project" value="UniProtKB-EC"/>
</dbReference>
<dbReference type="GO" id="GO:0099618">
    <property type="term" value="F:UDP-glucuronate dehydrogenase activity"/>
    <property type="evidence" value="ECO:0007669"/>
    <property type="project" value="UniProtKB-EC"/>
</dbReference>
<dbReference type="GO" id="GO:0009245">
    <property type="term" value="P:lipid A biosynthetic process"/>
    <property type="evidence" value="ECO:0007669"/>
    <property type="project" value="UniProtKB-KW"/>
</dbReference>
<dbReference type="GO" id="GO:0009103">
    <property type="term" value="P:lipopolysaccharide biosynthetic process"/>
    <property type="evidence" value="ECO:0007669"/>
    <property type="project" value="UniProtKB-UniRule"/>
</dbReference>
<dbReference type="GO" id="GO:0046677">
    <property type="term" value="P:response to antibiotic"/>
    <property type="evidence" value="ECO:0007669"/>
    <property type="project" value="UniProtKB-KW"/>
</dbReference>
<dbReference type="CDD" id="cd08702">
    <property type="entry name" value="Arna_FMT_C"/>
    <property type="match status" value="1"/>
</dbReference>
<dbReference type="CDD" id="cd05257">
    <property type="entry name" value="Arna_like_SDR_e"/>
    <property type="match status" value="1"/>
</dbReference>
<dbReference type="FunFam" id="3.40.50.720:FF:000197">
    <property type="entry name" value="Bifunctional polymyxin resistance protein ArnA"/>
    <property type="match status" value="1"/>
</dbReference>
<dbReference type="Gene3D" id="3.40.50.12230">
    <property type="match status" value="1"/>
</dbReference>
<dbReference type="Gene3D" id="3.40.50.720">
    <property type="entry name" value="NAD(P)-binding Rossmann-like Domain"/>
    <property type="match status" value="1"/>
</dbReference>
<dbReference type="HAMAP" id="MF_01166">
    <property type="entry name" value="ArnA"/>
    <property type="match status" value="1"/>
</dbReference>
<dbReference type="InterPro" id="IPR045869">
    <property type="entry name" value="Arna-like_SDR_e"/>
</dbReference>
<dbReference type="InterPro" id="IPR021168">
    <property type="entry name" value="Bifun_polymyxin_resist_ArnA"/>
</dbReference>
<dbReference type="InterPro" id="IPR001509">
    <property type="entry name" value="Epimerase_deHydtase"/>
</dbReference>
<dbReference type="InterPro" id="IPR005793">
    <property type="entry name" value="Formyl_trans_C"/>
</dbReference>
<dbReference type="InterPro" id="IPR002376">
    <property type="entry name" value="Formyl_transf_N"/>
</dbReference>
<dbReference type="InterPro" id="IPR036477">
    <property type="entry name" value="Formyl_transf_N_sf"/>
</dbReference>
<dbReference type="InterPro" id="IPR011034">
    <property type="entry name" value="Formyl_transferase-like_C_sf"/>
</dbReference>
<dbReference type="InterPro" id="IPR050177">
    <property type="entry name" value="Lipid_A_modif_metabolic_enz"/>
</dbReference>
<dbReference type="InterPro" id="IPR036291">
    <property type="entry name" value="NAD(P)-bd_dom_sf"/>
</dbReference>
<dbReference type="NCBIfam" id="NF005414">
    <property type="entry name" value="PRK06988.1"/>
    <property type="match status" value="1"/>
</dbReference>
<dbReference type="NCBIfam" id="NF005998">
    <property type="entry name" value="PRK08125.1"/>
    <property type="match status" value="1"/>
</dbReference>
<dbReference type="NCBIfam" id="NF008872">
    <property type="entry name" value="PRK11908.1"/>
    <property type="match status" value="1"/>
</dbReference>
<dbReference type="PANTHER" id="PTHR43245">
    <property type="entry name" value="BIFUNCTIONAL POLYMYXIN RESISTANCE PROTEIN ARNA"/>
    <property type="match status" value="1"/>
</dbReference>
<dbReference type="PANTHER" id="PTHR43245:SF13">
    <property type="entry name" value="UDP-D-APIOSE_UDP-D-XYLOSE SYNTHASE 2"/>
    <property type="match status" value="1"/>
</dbReference>
<dbReference type="Pfam" id="PF01370">
    <property type="entry name" value="Epimerase"/>
    <property type="match status" value="1"/>
</dbReference>
<dbReference type="Pfam" id="PF02911">
    <property type="entry name" value="Formyl_trans_C"/>
    <property type="match status" value="1"/>
</dbReference>
<dbReference type="Pfam" id="PF00551">
    <property type="entry name" value="Formyl_trans_N"/>
    <property type="match status" value="1"/>
</dbReference>
<dbReference type="PIRSF" id="PIRSF036506">
    <property type="entry name" value="Bifun_polymyxin_resist_ArnA"/>
    <property type="match status" value="1"/>
</dbReference>
<dbReference type="SUPFAM" id="SSF50486">
    <property type="entry name" value="FMT C-terminal domain-like"/>
    <property type="match status" value="1"/>
</dbReference>
<dbReference type="SUPFAM" id="SSF53328">
    <property type="entry name" value="Formyltransferase"/>
    <property type="match status" value="1"/>
</dbReference>
<dbReference type="SUPFAM" id="SSF51735">
    <property type="entry name" value="NAD(P)-binding Rossmann-fold domains"/>
    <property type="match status" value="1"/>
</dbReference>
<organism>
    <name type="scientific">Shewanella sediminis (strain HAW-EB3)</name>
    <dbReference type="NCBI Taxonomy" id="425104"/>
    <lineage>
        <taxon>Bacteria</taxon>
        <taxon>Pseudomonadati</taxon>
        <taxon>Pseudomonadota</taxon>
        <taxon>Gammaproteobacteria</taxon>
        <taxon>Alteromonadales</taxon>
        <taxon>Shewanellaceae</taxon>
        <taxon>Shewanella</taxon>
    </lineage>
</organism>
<proteinExistence type="inferred from homology"/>
<evidence type="ECO:0000255" key="1">
    <source>
        <dbReference type="HAMAP-Rule" id="MF_01166"/>
    </source>
</evidence>
<gene>
    <name evidence="1" type="primary">arnA</name>
    <name type="ordered locus">Ssed_0924</name>
</gene>